<proteinExistence type="inferred from homology"/>
<gene>
    <name evidence="1" type="primary">mgsA</name>
    <name type="ordered locus">BWG_0815</name>
</gene>
<evidence type="ECO:0000255" key="1">
    <source>
        <dbReference type="HAMAP-Rule" id="MF_00549"/>
    </source>
</evidence>
<protein>
    <recommendedName>
        <fullName evidence="1">Methylglyoxal synthase</fullName>
        <shortName evidence="1">MGS</shortName>
        <ecNumber evidence="1">4.2.3.3</ecNumber>
    </recommendedName>
</protein>
<keyword id="KW-0456">Lyase</keyword>
<comment type="function">
    <text evidence="1">Catalyzes the formation of methylglyoxal from dihydroxyacetone phosphate.</text>
</comment>
<comment type="catalytic activity">
    <reaction evidence="1">
        <text>dihydroxyacetone phosphate = methylglyoxal + phosphate</text>
        <dbReference type="Rhea" id="RHEA:17937"/>
        <dbReference type="ChEBI" id="CHEBI:17158"/>
        <dbReference type="ChEBI" id="CHEBI:43474"/>
        <dbReference type="ChEBI" id="CHEBI:57642"/>
        <dbReference type="EC" id="4.2.3.3"/>
    </reaction>
</comment>
<comment type="similarity">
    <text evidence="1">Belongs to the methylglyoxal synthase family.</text>
</comment>
<feature type="chain" id="PRO_1000211981" description="Methylglyoxal synthase">
    <location>
        <begin position="1"/>
        <end position="152"/>
    </location>
</feature>
<feature type="domain" description="MGS-like" evidence="1">
    <location>
        <begin position="6"/>
        <end position="152"/>
    </location>
</feature>
<feature type="active site" description="Proton donor/acceptor" evidence="1">
    <location>
        <position position="71"/>
    </location>
</feature>
<feature type="binding site" evidence="1">
    <location>
        <position position="19"/>
    </location>
    <ligand>
        <name>substrate</name>
    </ligand>
</feature>
<feature type="binding site" evidence="1">
    <location>
        <position position="23"/>
    </location>
    <ligand>
        <name>substrate</name>
    </ligand>
</feature>
<feature type="binding site" evidence="1">
    <location>
        <begin position="45"/>
        <end position="48"/>
    </location>
    <ligand>
        <name>substrate</name>
    </ligand>
</feature>
<feature type="binding site" evidence="1">
    <location>
        <begin position="65"/>
        <end position="66"/>
    </location>
    <ligand>
        <name>substrate</name>
    </ligand>
</feature>
<feature type="binding site" evidence="1">
    <location>
        <position position="98"/>
    </location>
    <ligand>
        <name>substrate</name>
    </ligand>
</feature>
<accession>C4ZQ89</accession>
<dbReference type="EC" id="4.2.3.3" evidence="1"/>
<dbReference type="EMBL" id="CP001396">
    <property type="protein sequence ID" value="ACR63768.1"/>
    <property type="molecule type" value="Genomic_DNA"/>
</dbReference>
<dbReference type="RefSeq" id="WP_000424181.1">
    <property type="nucleotide sequence ID" value="NC_012759.1"/>
</dbReference>
<dbReference type="SMR" id="C4ZQ89"/>
<dbReference type="GeneID" id="93776451"/>
<dbReference type="KEGG" id="ebw:BWG_0815"/>
<dbReference type="HOGENOM" id="CLU_120420_0_1_6"/>
<dbReference type="GO" id="GO:0005829">
    <property type="term" value="C:cytosol"/>
    <property type="evidence" value="ECO:0007669"/>
    <property type="project" value="TreeGrafter"/>
</dbReference>
<dbReference type="GO" id="GO:0008929">
    <property type="term" value="F:methylglyoxal synthase activity"/>
    <property type="evidence" value="ECO:0007669"/>
    <property type="project" value="UniProtKB-UniRule"/>
</dbReference>
<dbReference type="GO" id="GO:0019242">
    <property type="term" value="P:methylglyoxal biosynthetic process"/>
    <property type="evidence" value="ECO:0007669"/>
    <property type="project" value="UniProtKB-UniRule"/>
</dbReference>
<dbReference type="CDD" id="cd01422">
    <property type="entry name" value="MGS"/>
    <property type="match status" value="1"/>
</dbReference>
<dbReference type="FunFam" id="3.40.50.1380:FF:000002">
    <property type="entry name" value="Methylglyoxal synthase"/>
    <property type="match status" value="1"/>
</dbReference>
<dbReference type="Gene3D" id="3.40.50.1380">
    <property type="entry name" value="Methylglyoxal synthase-like domain"/>
    <property type="match status" value="1"/>
</dbReference>
<dbReference type="HAMAP" id="MF_00549">
    <property type="entry name" value="Methylglyoxal_synth"/>
    <property type="match status" value="1"/>
</dbReference>
<dbReference type="InterPro" id="IPR004363">
    <property type="entry name" value="Methylgl_synth"/>
</dbReference>
<dbReference type="InterPro" id="IPR018148">
    <property type="entry name" value="Methylglyoxal_synth_AS"/>
</dbReference>
<dbReference type="InterPro" id="IPR011607">
    <property type="entry name" value="MGS-like_dom"/>
</dbReference>
<dbReference type="InterPro" id="IPR036914">
    <property type="entry name" value="MGS-like_dom_sf"/>
</dbReference>
<dbReference type="NCBIfam" id="TIGR00160">
    <property type="entry name" value="MGSA"/>
    <property type="match status" value="1"/>
</dbReference>
<dbReference type="NCBIfam" id="NF003559">
    <property type="entry name" value="PRK05234.1"/>
    <property type="match status" value="1"/>
</dbReference>
<dbReference type="PANTHER" id="PTHR30492">
    <property type="entry name" value="METHYLGLYOXAL SYNTHASE"/>
    <property type="match status" value="1"/>
</dbReference>
<dbReference type="PANTHER" id="PTHR30492:SF0">
    <property type="entry name" value="METHYLGLYOXAL SYNTHASE"/>
    <property type="match status" value="1"/>
</dbReference>
<dbReference type="Pfam" id="PF02142">
    <property type="entry name" value="MGS"/>
    <property type="match status" value="1"/>
</dbReference>
<dbReference type="PIRSF" id="PIRSF006614">
    <property type="entry name" value="Methylglyox_syn"/>
    <property type="match status" value="1"/>
</dbReference>
<dbReference type="SMART" id="SM00851">
    <property type="entry name" value="MGS"/>
    <property type="match status" value="1"/>
</dbReference>
<dbReference type="SUPFAM" id="SSF52335">
    <property type="entry name" value="Methylglyoxal synthase-like"/>
    <property type="match status" value="1"/>
</dbReference>
<dbReference type="PROSITE" id="PS01335">
    <property type="entry name" value="METHYLGLYOXAL_SYNTH"/>
    <property type="match status" value="1"/>
</dbReference>
<dbReference type="PROSITE" id="PS51855">
    <property type="entry name" value="MGS"/>
    <property type="match status" value="1"/>
</dbReference>
<organism>
    <name type="scientific">Escherichia coli (strain K12 / MC4100 / BW2952)</name>
    <dbReference type="NCBI Taxonomy" id="595496"/>
    <lineage>
        <taxon>Bacteria</taxon>
        <taxon>Pseudomonadati</taxon>
        <taxon>Pseudomonadota</taxon>
        <taxon>Gammaproteobacteria</taxon>
        <taxon>Enterobacterales</taxon>
        <taxon>Enterobacteriaceae</taxon>
        <taxon>Escherichia</taxon>
    </lineage>
</organism>
<reference key="1">
    <citation type="journal article" date="2009" name="J. Bacteriol.">
        <title>Genomic sequencing reveals regulatory mutations and recombinational events in the widely used MC4100 lineage of Escherichia coli K-12.</title>
        <authorList>
            <person name="Ferenci T."/>
            <person name="Zhou Z."/>
            <person name="Betteridge T."/>
            <person name="Ren Y."/>
            <person name="Liu Y."/>
            <person name="Feng L."/>
            <person name="Reeves P.R."/>
            <person name="Wang L."/>
        </authorList>
    </citation>
    <scope>NUCLEOTIDE SEQUENCE [LARGE SCALE GENOMIC DNA]</scope>
    <source>
        <strain>K12 / MC4100 / BW2952</strain>
    </source>
</reference>
<name>MGSA_ECOBW</name>
<sequence>MELTTRTLPARKHIALVAHDHCKQMLMSWVERHQPLLEQHVLYATGTTGNLISRATGMNVNAMLSGPMGGDQQVGALISEGKIDVLIFFWDPLNAVPHDPDVKALLRLATVWNIPVATNVATADFIIQSPHFNDAVDILIPDYQRYLADRLK</sequence>